<gene>
    <name evidence="1" type="primary">rpsB</name>
    <name type="ordered locus">SA1099</name>
</gene>
<name>RS2_STAAN</name>
<evidence type="ECO:0000255" key="1">
    <source>
        <dbReference type="HAMAP-Rule" id="MF_00291"/>
    </source>
</evidence>
<evidence type="ECO:0000256" key="2">
    <source>
        <dbReference type="SAM" id="MobiDB-lite"/>
    </source>
</evidence>
<evidence type="ECO:0000305" key="3"/>
<keyword id="KW-0687">Ribonucleoprotein</keyword>
<keyword id="KW-0689">Ribosomal protein</keyword>
<organism>
    <name type="scientific">Staphylococcus aureus (strain N315)</name>
    <dbReference type="NCBI Taxonomy" id="158879"/>
    <lineage>
        <taxon>Bacteria</taxon>
        <taxon>Bacillati</taxon>
        <taxon>Bacillota</taxon>
        <taxon>Bacilli</taxon>
        <taxon>Bacillales</taxon>
        <taxon>Staphylococcaceae</taxon>
        <taxon>Staphylococcus</taxon>
    </lineage>
</organism>
<comment type="similarity">
    <text evidence="1">Belongs to the universal ribosomal protein uS2 family.</text>
</comment>
<dbReference type="EMBL" id="BA000018">
    <property type="protein sequence ID" value="BAB42351.1"/>
    <property type="molecule type" value="Genomic_DNA"/>
</dbReference>
<dbReference type="PIR" id="C89899">
    <property type="entry name" value="C89899"/>
</dbReference>
<dbReference type="RefSeq" id="WP_000268484.1">
    <property type="nucleotide sequence ID" value="NC_002745.2"/>
</dbReference>
<dbReference type="SMR" id="P66544"/>
<dbReference type="EnsemblBacteria" id="BAB42351">
    <property type="protein sequence ID" value="BAB42351"/>
    <property type="gene ID" value="BAB42351"/>
</dbReference>
<dbReference type="GeneID" id="98345571"/>
<dbReference type="KEGG" id="sau:SA1099"/>
<dbReference type="HOGENOM" id="CLU_040318_1_2_9"/>
<dbReference type="GO" id="GO:0022627">
    <property type="term" value="C:cytosolic small ribosomal subunit"/>
    <property type="evidence" value="ECO:0007669"/>
    <property type="project" value="TreeGrafter"/>
</dbReference>
<dbReference type="GO" id="GO:0003735">
    <property type="term" value="F:structural constituent of ribosome"/>
    <property type="evidence" value="ECO:0007669"/>
    <property type="project" value="InterPro"/>
</dbReference>
<dbReference type="GO" id="GO:0006412">
    <property type="term" value="P:translation"/>
    <property type="evidence" value="ECO:0007669"/>
    <property type="project" value="UniProtKB-UniRule"/>
</dbReference>
<dbReference type="CDD" id="cd01425">
    <property type="entry name" value="RPS2"/>
    <property type="match status" value="1"/>
</dbReference>
<dbReference type="FunFam" id="1.10.287.610:FF:000001">
    <property type="entry name" value="30S ribosomal protein S2"/>
    <property type="match status" value="1"/>
</dbReference>
<dbReference type="Gene3D" id="3.40.50.10490">
    <property type="entry name" value="Glucose-6-phosphate isomerase like protein, domain 1"/>
    <property type="match status" value="1"/>
</dbReference>
<dbReference type="Gene3D" id="1.10.287.610">
    <property type="entry name" value="Helix hairpin bin"/>
    <property type="match status" value="1"/>
</dbReference>
<dbReference type="HAMAP" id="MF_00291_B">
    <property type="entry name" value="Ribosomal_uS2_B"/>
    <property type="match status" value="1"/>
</dbReference>
<dbReference type="InterPro" id="IPR001865">
    <property type="entry name" value="Ribosomal_uS2"/>
</dbReference>
<dbReference type="InterPro" id="IPR005706">
    <property type="entry name" value="Ribosomal_uS2_bac/mit/plastid"/>
</dbReference>
<dbReference type="InterPro" id="IPR018130">
    <property type="entry name" value="Ribosomal_uS2_CS"/>
</dbReference>
<dbReference type="InterPro" id="IPR023591">
    <property type="entry name" value="Ribosomal_uS2_flav_dom_sf"/>
</dbReference>
<dbReference type="NCBIfam" id="TIGR01011">
    <property type="entry name" value="rpsB_bact"/>
    <property type="match status" value="1"/>
</dbReference>
<dbReference type="PANTHER" id="PTHR12534">
    <property type="entry name" value="30S RIBOSOMAL PROTEIN S2 PROKARYOTIC AND ORGANELLAR"/>
    <property type="match status" value="1"/>
</dbReference>
<dbReference type="PANTHER" id="PTHR12534:SF0">
    <property type="entry name" value="SMALL RIBOSOMAL SUBUNIT PROTEIN US2M"/>
    <property type="match status" value="1"/>
</dbReference>
<dbReference type="Pfam" id="PF00318">
    <property type="entry name" value="Ribosomal_S2"/>
    <property type="match status" value="1"/>
</dbReference>
<dbReference type="PRINTS" id="PR00395">
    <property type="entry name" value="RIBOSOMALS2"/>
</dbReference>
<dbReference type="SUPFAM" id="SSF52313">
    <property type="entry name" value="Ribosomal protein S2"/>
    <property type="match status" value="1"/>
</dbReference>
<dbReference type="PROSITE" id="PS00962">
    <property type="entry name" value="RIBOSOMAL_S2_1"/>
    <property type="match status" value="1"/>
</dbReference>
<dbReference type="PROSITE" id="PS00963">
    <property type="entry name" value="RIBOSOMAL_S2_2"/>
    <property type="match status" value="1"/>
</dbReference>
<proteinExistence type="evidence at protein level"/>
<feature type="chain" id="PRO_0000134240" description="Small ribosomal subunit protein uS2">
    <location>
        <begin position="1"/>
        <end position="255"/>
    </location>
</feature>
<feature type="region of interest" description="Disordered" evidence="2">
    <location>
        <begin position="226"/>
        <end position="255"/>
    </location>
</feature>
<reference key="1">
    <citation type="journal article" date="2001" name="Lancet">
        <title>Whole genome sequencing of meticillin-resistant Staphylococcus aureus.</title>
        <authorList>
            <person name="Kuroda M."/>
            <person name="Ohta T."/>
            <person name="Uchiyama I."/>
            <person name="Baba T."/>
            <person name="Yuzawa H."/>
            <person name="Kobayashi I."/>
            <person name="Cui L."/>
            <person name="Oguchi A."/>
            <person name="Aoki K."/>
            <person name="Nagai Y."/>
            <person name="Lian J.-Q."/>
            <person name="Ito T."/>
            <person name="Kanamori M."/>
            <person name="Matsumaru H."/>
            <person name="Maruyama A."/>
            <person name="Murakami H."/>
            <person name="Hosoyama A."/>
            <person name="Mizutani-Ui Y."/>
            <person name="Takahashi N.K."/>
            <person name="Sawano T."/>
            <person name="Inoue R."/>
            <person name="Kaito C."/>
            <person name="Sekimizu K."/>
            <person name="Hirakawa H."/>
            <person name="Kuhara S."/>
            <person name="Goto S."/>
            <person name="Yabuzaki J."/>
            <person name="Kanehisa M."/>
            <person name="Yamashita A."/>
            <person name="Oshima K."/>
            <person name="Furuya K."/>
            <person name="Yoshino C."/>
            <person name="Shiba T."/>
            <person name="Hattori M."/>
            <person name="Ogasawara N."/>
            <person name="Hayashi H."/>
            <person name="Hiramatsu K."/>
        </authorList>
    </citation>
    <scope>NUCLEOTIDE SEQUENCE [LARGE SCALE GENOMIC DNA]</scope>
    <source>
        <strain>N315</strain>
    </source>
</reference>
<reference key="2">
    <citation type="submission" date="2005-11" db="UniProtKB">
        <title>Shotgun proteomic analysis of total protein extract of S. aureus S30 versus N315.</title>
        <authorList>
            <person name="Stenz L."/>
        </authorList>
    </citation>
    <scope>IDENTIFICATION BY MASS SPECTROMETRY</scope>
</reference>
<reference key="3">
    <citation type="submission" date="2007-10" db="UniProtKB">
        <title>Shotgun proteomic analysis of total and membrane protein extracts of S. aureus strain N315.</title>
        <authorList>
            <person name="Vaezzadeh A.R."/>
            <person name="Deshusses J."/>
            <person name="Lescuyer P."/>
            <person name="Hochstrasser D.F."/>
        </authorList>
    </citation>
    <scope>IDENTIFICATION BY MASS SPECTROMETRY [LARGE SCALE ANALYSIS]</scope>
    <source>
        <strain>N315</strain>
    </source>
</reference>
<protein>
    <recommendedName>
        <fullName evidence="1">Small ribosomal subunit protein uS2</fullName>
    </recommendedName>
    <alternativeName>
        <fullName evidence="3">30S ribosomal protein S2</fullName>
    </alternativeName>
</protein>
<sequence length="255" mass="29094">MAVISMKQLLEAGVHFGHQTRRWNPKMKKYIFTERNGIYIIDLQKTVKKVDEAYNFLKQVSEDGGQVLFVGTKKQAQESVKSEAERAGQFYINQRWLGGLLTNYKTISKRIKRISEIEKMEEDGLFEVLPKKEVVELKKEYDRLIKFLGGIRDMKSMPQALFVVDPRKERNAIAEARKLNIPIVGIVDTNCDPDEIDYVIPANDDAIRAVKLLTAKMADAILEGQQGVSNEEVAAEQNIDLDEKEKSEETEATEE</sequence>
<accession>P66544</accession>
<accession>Q99UL5</accession>